<comment type="function">
    <text evidence="2 3 4">Viral serpin that inhibits both cysteine and serine proteinases involved in the regulation of host inflammatory and apoptosis processes (PubMed:10975564). Major anti-apoptotic protein which inhibits both intrinsic and extrinsic pathways and strongly cleaves host CASP1 and CASP8 but is a rather poor inhibitor of host CASP3 (PubMed:10903953). Prevents the proteolytic activity of host interleukin-1-beta converting enzyme (ICE) and ICE-like enzymes. Can also block apoptosis through host tumor necrosis factor (TNF) receptor.</text>
</comment>
<comment type="subcellular location">
    <subcellularLocation>
        <location evidence="2">Host cytoplasm</location>
    </subcellularLocation>
</comment>
<comment type="similarity">
    <text evidence="5">Belongs to the serpin family. Poxviruses subfamily.</text>
</comment>
<name>SPI2_CWPXB</name>
<organismHost>
    <name type="scientific">Bos taurus</name>
    <name type="common">Bovine</name>
    <dbReference type="NCBI Taxonomy" id="9913"/>
</organismHost>
<organismHost>
    <name type="scientific">Felis catus</name>
    <name type="common">Cat</name>
    <name type="synonym">Felis silvestris catus</name>
    <dbReference type="NCBI Taxonomy" id="9685"/>
</organismHost>
<organismHost>
    <name type="scientific">Homo sapiens</name>
    <name type="common">Human</name>
    <dbReference type="NCBI Taxonomy" id="9606"/>
</organismHost>
<organismHost>
    <name type="scientific">Loxodonta africana</name>
    <name type="common">African elephant</name>
    <dbReference type="NCBI Taxonomy" id="9785"/>
</organismHost>
<organismHost>
    <name type="scientific">Microtus agrestis</name>
    <name type="common">Short-tailed field vole</name>
    <dbReference type="NCBI Taxonomy" id="29092"/>
</organismHost>
<organismHost>
    <name type="scientific">Mus musculus</name>
    <name type="common">Mouse</name>
    <dbReference type="NCBI Taxonomy" id="10090"/>
</organismHost>
<organismHost>
    <name type="scientific">Myodes glareolus</name>
    <name type="common">Bank vole</name>
    <name type="synonym">Clethrionomys glareolus</name>
    <dbReference type="NCBI Taxonomy" id="447135"/>
</organismHost>
<sequence>MDIFREIASSMKGENVFISPPSISSVLTILYYGANGSTAEQLSKYVEKEADKNKDDISFKSMNKVYGRYSAVFKDSFLRKIGDNFQTVDFTDCRTVDAINKCVDIFTEGKINPLLDEPLSPDTCLLAISAVYFKAKWLMPFEKEFTSDYPFYVSPTEMVDVSMMSMYGEAFNHASVKESFGNFSIIELPYVGDTSMVVILPDNIDGLESIEQNLTDTNFKKWCDSMDAMFIDVHIPKFKVTGSYNLVDALVKLGLTEVFGSTGDYSNMCNSDVSVDAMIHKTYIDVNEEYTEAAAATCALVADCASTVTNEFCADHPFIYVIRHVDGKILFVGRYCSPTTN</sequence>
<evidence type="ECO:0000250" key="1"/>
<evidence type="ECO:0000250" key="2">
    <source>
        <dbReference type="UniProtKB" id="P15059"/>
    </source>
</evidence>
<evidence type="ECO:0000269" key="3">
    <source>
    </source>
</evidence>
<evidence type="ECO:0000269" key="4">
    <source>
    </source>
</evidence>
<evidence type="ECO:0000305" key="5"/>
<evidence type="ECO:0007744" key="6">
    <source>
        <dbReference type="PDB" id="1C8O"/>
    </source>
</evidence>
<evidence type="ECO:0007744" key="7">
    <source>
        <dbReference type="PDB" id="1F0C"/>
    </source>
</evidence>
<evidence type="ECO:0007744" key="8">
    <source>
        <dbReference type="PDB" id="1M93"/>
    </source>
</evidence>
<evidence type="ECO:0007829" key="9">
    <source>
        <dbReference type="PDB" id="1C8O"/>
    </source>
</evidence>
<evidence type="ECO:0007829" key="10">
    <source>
        <dbReference type="PDB" id="1F0C"/>
    </source>
</evidence>
<evidence type="ECO:0007829" key="11">
    <source>
        <dbReference type="PDB" id="1M93"/>
    </source>
</evidence>
<feature type="chain" id="PRO_0000094146" description="Serine proteinase inhibitor 2">
    <location>
        <begin position="1"/>
        <end position="341"/>
    </location>
</feature>
<feature type="site" description="Reactive bond" evidence="1">
    <location>
        <begin position="303"/>
        <end position="304"/>
    </location>
</feature>
<feature type="helix" evidence="11">
    <location>
        <begin position="2"/>
        <end position="10"/>
    </location>
</feature>
<feature type="turn" evidence="11">
    <location>
        <begin position="11"/>
        <end position="13"/>
    </location>
</feature>
<feature type="strand" evidence="11">
    <location>
        <begin position="16"/>
        <end position="18"/>
    </location>
</feature>
<feature type="helix" evidence="11">
    <location>
        <begin position="20"/>
        <end position="33"/>
    </location>
</feature>
<feature type="helix" evidence="11">
    <location>
        <begin position="36"/>
        <end position="43"/>
    </location>
</feature>
<feature type="turn" evidence="9">
    <location>
        <begin position="48"/>
        <end position="50"/>
    </location>
</feature>
<feature type="strand" evidence="9">
    <location>
        <begin position="51"/>
        <end position="53"/>
    </location>
</feature>
<feature type="strand" evidence="11">
    <location>
        <begin position="58"/>
        <end position="68"/>
    </location>
</feature>
<feature type="helix" evidence="11">
    <location>
        <begin position="75"/>
        <end position="81"/>
    </location>
</feature>
<feature type="helix" evidence="10">
    <location>
        <begin position="82"/>
        <end position="84"/>
    </location>
</feature>
<feature type="strand" evidence="11">
    <location>
        <begin position="85"/>
        <end position="88"/>
    </location>
</feature>
<feature type="strand" evidence="10">
    <location>
        <begin position="90"/>
        <end position="92"/>
    </location>
</feature>
<feature type="helix" evidence="11">
    <location>
        <begin position="94"/>
        <end position="106"/>
    </location>
</feature>
<feature type="turn" evidence="11">
    <location>
        <begin position="107"/>
        <end position="109"/>
    </location>
</feature>
<feature type="strand" evidence="11">
    <location>
        <begin position="125"/>
        <end position="139"/>
    </location>
</feature>
<feature type="helix" evidence="11">
    <location>
        <begin position="143"/>
        <end position="145"/>
    </location>
</feature>
<feature type="strand" evidence="11">
    <location>
        <begin position="147"/>
        <end position="154"/>
    </location>
</feature>
<feature type="strand" evidence="11">
    <location>
        <begin position="157"/>
        <end position="166"/>
    </location>
</feature>
<feature type="strand" evidence="11">
    <location>
        <begin position="170"/>
        <end position="176"/>
    </location>
</feature>
<feature type="strand" evidence="11">
    <location>
        <begin position="183"/>
        <end position="203"/>
    </location>
</feature>
<feature type="helix" evidence="11">
    <location>
        <begin position="207"/>
        <end position="211"/>
    </location>
</feature>
<feature type="helix" evidence="11">
    <location>
        <begin position="216"/>
        <end position="224"/>
    </location>
</feature>
<feature type="strand" evidence="11">
    <location>
        <begin position="227"/>
        <end position="230"/>
    </location>
</feature>
<feature type="strand" evidence="11">
    <location>
        <begin position="232"/>
        <end position="236"/>
    </location>
</feature>
<feature type="strand" evidence="11">
    <location>
        <begin position="238"/>
        <end position="245"/>
    </location>
</feature>
<feature type="helix" evidence="11">
    <location>
        <begin position="246"/>
        <end position="252"/>
    </location>
</feature>
<feature type="strand" evidence="11">
    <location>
        <begin position="258"/>
        <end position="260"/>
    </location>
</feature>
<feature type="turn" evidence="11">
    <location>
        <begin position="266"/>
        <end position="268"/>
    </location>
</feature>
<feature type="strand" evidence="11">
    <location>
        <begin position="269"/>
        <end position="271"/>
    </location>
</feature>
<feature type="strand" evidence="11">
    <location>
        <begin position="278"/>
        <end position="286"/>
    </location>
</feature>
<feature type="strand" evidence="11">
    <location>
        <begin position="288"/>
        <end position="299"/>
    </location>
</feature>
<feature type="strand" evidence="11">
    <location>
        <begin position="311"/>
        <end position="313"/>
    </location>
</feature>
<feature type="strand" evidence="11">
    <location>
        <begin position="318"/>
        <end position="324"/>
    </location>
</feature>
<feature type="strand" evidence="11">
    <location>
        <begin position="329"/>
        <end position="335"/>
    </location>
</feature>
<gene>
    <name type="primary">OPG199</name>
    <name type="synonym">SPI-2</name>
    <name type="ordered locus">CPXV207</name>
</gene>
<dbReference type="EMBL" id="M14217">
    <property type="protein sequence ID" value="AAA42922.1"/>
    <property type="molecule type" value="Genomic_DNA"/>
</dbReference>
<dbReference type="EMBL" id="AF482758">
    <property type="protein sequence ID" value="AAM13646.1"/>
    <property type="molecule type" value="Genomic_DNA"/>
</dbReference>
<dbReference type="PIR" id="A26477">
    <property type="entry name" value="WMVZHI"/>
</dbReference>
<dbReference type="RefSeq" id="NP_619988.1">
    <property type="nucleotide sequence ID" value="NC_003663.2"/>
</dbReference>
<dbReference type="PDB" id="1C8O">
    <property type="method" value="X-ray"/>
    <property type="resolution" value="2.90 A"/>
    <property type="chains" value="A=1-300, B=301-341"/>
</dbReference>
<dbReference type="PDB" id="1F0C">
    <property type="method" value="X-ray"/>
    <property type="resolution" value="2.26 A"/>
    <property type="chains" value="A=1-305, B=306-341"/>
</dbReference>
<dbReference type="PDB" id="1M93">
    <property type="method" value="X-ray"/>
    <property type="resolution" value="1.65 A"/>
    <property type="chains" value="A=1-55, B=56-300, C=301-341"/>
</dbReference>
<dbReference type="PDBsum" id="1C8O"/>
<dbReference type="PDBsum" id="1F0C"/>
<dbReference type="PDBsum" id="1M93"/>
<dbReference type="SMR" id="P07385"/>
<dbReference type="MINT" id="P07385"/>
<dbReference type="MEROPS" id="I04.028"/>
<dbReference type="KEGG" id="vg:1486086"/>
<dbReference type="Reactome" id="R-HSA-5357905">
    <property type="pathway name" value="Regulation of TNFR1 signaling"/>
</dbReference>
<dbReference type="Reactome" id="R-HSA-9686347">
    <property type="pathway name" value="Microbial modulation of RIPK1-mediated regulated necrosis"/>
</dbReference>
<dbReference type="EvolutionaryTrace" id="P07385"/>
<dbReference type="Proteomes" id="UP000152733">
    <property type="component" value="Segment"/>
</dbReference>
<dbReference type="GO" id="GO:0005737">
    <property type="term" value="C:cytoplasm"/>
    <property type="evidence" value="ECO:0000305"/>
    <property type="project" value="UniProt"/>
</dbReference>
<dbReference type="GO" id="GO:0005615">
    <property type="term" value="C:extracellular space"/>
    <property type="evidence" value="ECO:0007669"/>
    <property type="project" value="InterPro"/>
</dbReference>
<dbReference type="GO" id="GO:0030430">
    <property type="term" value="C:host cell cytoplasm"/>
    <property type="evidence" value="ECO:0007669"/>
    <property type="project" value="UniProtKB-SubCell"/>
</dbReference>
<dbReference type="GO" id="GO:0004869">
    <property type="term" value="F:cysteine-type endopeptidase inhibitor activity"/>
    <property type="evidence" value="ECO:0007669"/>
    <property type="project" value="UniProtKB-KW"/>
</dbReference>
<dbReference type="GO" id="GO:0140311">
    <property type="term" value="F:protein sequestering activity"/>
    <property type="evidence" value="ECO:0000314"/>
    <property type="project" value="UniProt"/>
</dbReference>
<dbReference type="GO" id="GO:0004867">
    <property type="term" value="F:serine-type endopeptidase inhibitor activity"/>
    <property type="evidence" value="ECO:0007669"/>
    <property type="project" value="InterPro"/>
</dbReference>
<dbReference type="GO" id="GO:0033668">
    <property type="term" value="P:symbiont-mediated suppression of host apoptosis"/>
    <property type="evidence" value="ECO:0007669"/>
    <property type="project" value="UniProtKB-KW"/>
</dbReference>
<dbReference type="GO" id="GO:0039723">
    <property type="term" value="P:symbiont-mediated suppression of host cytoplasmic pattern recognition receptor signaling pathway via inhibition of TBK1 activity"/>
    <property type="evidence" value="ECO:0000314"/>
    <property type="project" value="UniProt"/>
</dbReference>
<dbReference type="FunFam" id="1.10.287.580:FF:000001">
    <property type="entry name" value="Serine proteinase inhibitor 2"/>
    <property type="match status" value="1"/>
</dbReference>
<dbReference type="Gene3D" id="2.30.39.10">
    <property type="entry name" value="Alpha-1-antitrypsin, domain 1"/>
    <property type="match status" value="1"/>
</dbReference>
<dbReference type="Gene3D" id="3.30.497.10">
    <property type="entry name" value="Antithrombin, subunit I, domain 2"/>
    <property type="match status" value="1"/>
</dbReference>
<dbReference type="Gene3D" id="1.10.287.580">
    <property type="entry name" value="Helix hairpin bin"/>
    <property type="match status" value="1"/>
</dbReference>
<dbReference type="InterPro" id="IPR023795">
    <property type="entry name" value="Serpin_CS"/>
</dbReference>
<dbReference type="InterPro" id="IPR023796">
    <property type="entry name" value="Serpin_dom"/>
</dbReference>
<dbReference type="InterPro" id="IPR000215">
    <property type="entry name" value="Serpin_fam"/>
</dbReference>
<dbReference type="InterPro" id="IPR036186">
    <property type="entry name" value="Serpin_sf"/>
</dbReference>
<dbReference type="InterPro" id="IPR042178">
    <property type="entry name" value="Serpin_sf_1"/>
</dbReference>
<dbReference type="InterPro" id="IPR042185">
    <property type="entry name" value="Serpin_sf_2"/>
</dbReference>
<dbReference type="PANTHER" id="PTHR11461:SF211">
    <property type="entry name" value="GH10112P-RELATED"/>
    <property type="match status" value="1"/>
</dbReference>
<dbReference type="PANTHER" id="PTHR11461">
    <property type="entry name" value="SERINE PROTEASE INHIBITOR, SERPIN"/>
    <property type="match status" value="1"/>
</dbReference>
<dbReference type="Pfam" id="PF00079">
    <property type="entry name" value="Serpin"/>
    <property type="match status" value="1"/>
</dbReference>
<dbReference type="SMART" id="SM00093">
    <property type="entry name" value="SERPIN"/>
    <property type="match status" value="1"/>
</dbReference>
<dbReference type="SUPFAM" id="SSF56574">
    <property type="entry name" value="Serpins"/>
    <property type="match status" value="1"/>
</dbReference>
<dbReference type="PROSITE" id="PS00284">
    <property type="entry name" value="SERPIN"/>
    <property type="match status" value="1"/>
</dbReference>
<organism>
    <name type="scientific">Cowpox virus (strain Brighton Red)</name>
    <name type="common">CPV</name>
    <dbReference type="NCBI Taxonomy" id="265872"/>
    <lineage>
        <taxon>Viruses</taxon>
        <taxon>Varidnaviria</taxon>
        <taxon>Bamfordvirae</taxon>
        <taxon>Nucleocytoviricota</taxon>
        <taxon>Pokkesviricetes</taxon>
        <taxon>Chitovirales</taxon>
        <taxon>Poxviridae</taxon>
        <taxon>Chordopoxvirinae</taxon>
        <taxon>Orthopoxvirus</taxon>
        <taxon>Cowpox virus</taxon>
    </lineage>
</organism>
<proteinExistence type="evidence at protein level"/>
<accession>P07385</accession>
<protein>
    <recommendedName>
        <fullName>Serine proteinase inhibitor 2</fullName>
        <shortName>Serp-2</shortName>
        <shortName>Serpin-2</shortName>
    </recommendedName>
    <alternativeName>
        <fullName>Cytokine response modifier protein A</fullName>
    </alternativeName>
    <alternativeName>
        <fullName>Hemorrhage-inducing 38 kDa protein</fullName>
    </alternativeName>
    <alternativeName>
        <fullName>ICE inhibitor</fullName>
    </alternativeName>
</protein>
<keyword id="KW-0002">3D-structure</keyword>
<keyword id="KW-1035">Host cytoplasm</keyword>
<keyword id="KW-0945">Host-virus interaction</keyword>
<keyword id="KW-1085">Inhibition of host caspases by virus</keyword>
<keyword id="KW-1119">Modulation of host cell apoptosis by virus</keyword>
<keyword id="KW-0646">Protease inhibitor</keyword>
<keyword id="KW-0789">Thiol protease inhibitor</keyword>
<reference key="1">
    <citation type="journal article" date="1986" name="Proc. Natl. Acad. Sci. U.S.A.">
        <title>Hemorrhage in lesions caused by cowpox virus is induced by a viral protein that is related to plasma protein inhibitors of serine proteases.</title>
        <authorList>
            <person name="Pickup D.J."/>
            <person name="Ink B.S."/>
            <person name="Hu W."/>
            <person name="Ray C.A."/>
            <person name="Joklik W.K."/>
        </authorList>
    </citation>
    <scope>NUCLEOTIDE SEQUENCE [GENOMIC DNA]</scope>
    <source>
        <strain>White-pock variant</strain>
    </source>
</reference>
<reference key="2">
    <citation type="submission" date="2003-05" db="EMBL/GenBank/DDBJ databases">
        <authorList>
            <person name="Dietrich F.S."/>
            <person name="Ray C.A."/>
            <person name="Sharma D.A."/>
            <person name="Allen A."/>
            <person name="Pickup D.J."/>
        </authorList>
    </citation>
    <scope>NUCLEOTIDE SEQUENCE [LARGE SCALE GENOMIC DNA]</scope>
</reference>
<reference key="3">
    <citation type="journal article" date="1989" name="Virology">
        <title>Inhibition of an inflammatory response is mediated by a 38-kDa protein of cowpox virus.</title>
        <authorList>
            <person name="Palumbo G.J."/>
            <person name="Pickup D.J."/>
            <person name="Fredrickson T.N."/>
            <person name="McIntyre L.J."/>
            <person name="Buller R.M."/>
        </authorList>
    </citation>
    <scope>CHARACTERIZATION</scope>
</reference>
<reference key="4">
    <citation type="journal article" date="1992" name="Cell">
        <title>Viral inhibition of inflammation: cowpox virus encodes an inhibitor of the interleukin-1 beta converting enzyme.</title>
        <authorList>
            <person name="Ray C.A."/>
            <person name="Black R.A."/>
            <person name="Kronheim S.R."/>
            <person name="Greenstreet T.A."/>
            <person name="Sleath P.R."/>
            <person name="Salvesen G.S."/>
            <person name="Pickup D.J."/>
        </authorList>
    </citation>
    <scope>FUNCTION</scope>
</reference>
<reference key="5">
    <citation type="journal article" date="1994" name="J. Biol. Chem.">
        <title>Inhibition of interleukin-1 beta converting enzyme by the cowpox virus serpin CrmA. An example of cross-class inhibition.</title>
        <authorList>
            <person name="Komiyama T."/>
            <person name="Ray C.A."/>
            <person name="Pickup D.J."/>
            <person name="Howard A.D."/>
            <person name="Thornberry N.A."/>
            <person name="Peterson E.P."/>
            <person name="Salvesen G."/>
        </authorList>
    </citation>
    <scope>FUNCTION</scope>
</reference>
<reference evidence="6 8" key="6">
    <citation type="journal article" date="2000" name="Protein Sci.">
        <title>Crystal structure of viral serpin crmA provides insights into its mechanism of cysteine proteinase inhibition.</title>
        <authorList>
            <person name="Simonovic M."/>
            <person name="Gettins P.G.W."/>
            <person name="Volz K."/>
        </authorList>
    </citation>
    <scope>X-RAY CRYSTALLOGRAPHY (1.65 ANGSTROMS) OF 1-55; 56-300 AND 301-341</scope>
    <scope>FUNCTION</scope>
</reference>
<reference evidence="7" key="7">
    <citation type="journal article" date="2000" name="Structure">
        <title>Crystal structure of the apoptotic suppressor CrmA in its cleaved form.</title>
        <authorList>
            <person name="Renatus M."/>
            <person name="Zhou Q."/>
            <person name="Stennicke H.R."/>
            <person name="Snipas S.J."/>
            <person name="Turk D."/>
            <person name="Bankston L.A."/>
            <person name="Liddington R.C."/>
            <person name="Salvesen G.S."/>
        </authorList>
    </citation>
    <scope>X-RAY CRYSTALLOGRAPHY (2.26 ANGSTROMS) OF 1-305 AND 306-341</scope>
</reference>